<evidence type="ECO:0000255" key="1">
    <source>
        <dbReference type="HAMAP-Rule" id="MF_01366"/>
    </source>
</evidence>
<evidence type="ECO:0000305" key="2"/>
<proteinExistence type="inferred from homology"/>
<gene>
    <name evidence="1" type="primary">rplM</name>
    <name type="ordered locus">RHOS4_16220</name>
    <name type="ORF">RSP_0022</name>
</gene>
<dbReference type="EMBL" id="CP000143">
    <property type="protein sequence ID" value="ABA79190.1"/>
    <property type="molecule type" value="Genomic_DNA"/>
</dbReference>
<dbReference type="RefSeq" id="WP_002720164.1">
    <property type="nucleotide sequence ID" value="NZ_CP030271.1"/>
</dbReference>
<dbReference type="RefSeq" id="YP_353091.1">
    <property type="nucleotide sequence ID" value="NC_007493.2"/>
</dbReference>
<dbReference type="SMR" id="Q3J1Z4"/>
<dbReference type="STRING" id="272943.RSP_0022"/>
<dbReference type="EnsemblBacteria" id="ABA79190">
    <property type="protein sequence ID" value="ABA79190"/>
    <property type="gene ID" value="RSP_0022"/>
</dbReference>
<dbReference type="GeneID" id="67446748"/>
<dbReference type="KEGG" id="rsp:RSP_0022"/>
<dbReference type="PATRIC" id="fig|272943.9.peg.1952"/>
<dbReference type="eggNOG" id="COG0102">
    <property type="taxonomic scope" value="Bacteria"/>
</dbReference>
<dbReference type="OrthoDB" id="9801330at2"/>
<dbReference type="PhylomeDB" id="Q3J1Z4"/>
<dbReference type="Proteomes" id="UP000002703">
    <property type="component" value="Chromosome 1"/>
</dbReference>
<dbReference type="GO" id="GO:0022625">
    <property type="term" value="C:cytosolic large ribosomal subunit"/>
    <property type="evidence" value="ECO:0007669"/>
    <property type="project" value="TreeGrafter"/>
</dbReference>
<dbReference type="GO" id="GO:0003729">
    <property type="term" value="F:mRNA binding"/>
    <property type="evidence" value="ECO:0007669"/>
    <property type="project" value="TreeGrafter"/>
</dbReference>
<dbReference type="GO" id="GO:0003735">
    <property type="term" value="F:structural constituent of ribosome"/>
    <property type="evidence" value="ECO:0007669"/>
    <property type="project" value="InterPro"/>
</dbReference>
<dbReference type="GO" id="GO:0017148">
    <property type="term" value="P:negative regulation of translation"/>
    <property type="evidence" value="ECO:0007669"/>
    <property type="project" value="TreeGrafter"/>
</dbReference>
<dbReference type="GO" id="GO:0006412">
    <property type="term" value="P:translation"/>
    <property type="evidence" value="ECO:0007669"/>
    <property type="project" value="UniProtKB-UniRule"/>
</dbReference>
<dbReference type="CDD" id="cd00392">
    <property type="entry name" value="Ribosomal_L13"/>
    <property type="match status" value="1"/>
</dbReference>
<dbReference type="FunFam" id="3.90.1180.10:FF:000001">
    <property type="entry name" value="50S ribosomal protein L13"/>
    <property type="match status" value="1"/>
</dbReference>
<dbReference type="Gene3D" id="3.90.1180.10">
    <property type="entry name" value="Ribosomal protein L13"/>
    <property type="match status" value="1"/>
</dbReference>
<dbReference type="HAMAP" id="MF_01366">
    <property type="entry name" value="Ribosomal_uL13"/>
    <property type="match status" value="1"/>
</dbReference>
<dbReference type="InterPro" id="IPR005822">
    <property type="entry name" value="Ribosomal_uL13"/>
</dbReference>
<dbReference type="InterPro" id="IPR005823">
    <property type="entry name" value="Ribosomal_uL13_bac-type"/>
</dbReference>
<dbReference type="InterPro" id="IPR036899">
    <property type="entry name" value="Ribosomal_uL13_sf"/>
</dbReference>
<dbReference type="NCBIfam" id="TIGR01066">
    <property type="entry name" value="rplM_bact"/>
    <property type="match status" value="1"/>
</dbReference>
<dbReference type="PANTHER" id="PTHR11545:SF2">
    <property type="entry name" value="LARGE RIBOSOMAL SUBUNIT PROTEIN UL13M"/>
    <property type="match status" value="1"/>
</dbReference>
<dbReference type="PANTHER" id="PTHR11545">
    <property type="entry name" value="RIBOSOMAL PROTEIN L13"/>
    <property type="match status" value="1"/>
</dbReference>
<dbReference type="Pfam" id="PF00572">
    <property type="entry name" value="Ribosomal_L13"/>
    <property type="match status" value="1"/>
</dbReference>
<dbReference type="PIRSF" id="PIRSF002181">
    <property type="entry name" value="Ribosomal_L13"/>
    <property type="match status" value="1"/>
</dbReference>
<dbReference type="SUPFAM" id="SSF52161">
    <property type="entry name" value="Ribosomal protein L13"/>
    <property type="match status" value="1"/>
</dbReference>
<protein>
    <recommendedName>
        <fullName evidence="1">Large ribosomal subunit protein uL13</fullName>
    </recommendedName>
    <alternativeName>
        <fullName evidence="2">50S ribosomal protein L13</fullName>
    </alternativeName>
</protein>
<accession>Q3J1Z4</accession>
<sequence>MKTFTATPADIEKKWILIDAEGVVLGRLATIVANILRGKNKPTFTPHMDMGDNVIVINADKVQMTGNKRADKRYYWHTGHPGGVKFRTAEQVLEGAHPERVVLKAVERMISRNSLGRQQMTNLRVYAGAEHPHEAQQPTVLDVKSLNPKNTRSA</sequence>
<comment type="function">
    <text evidence="1">This protein is one of the early assembly proteins of the 50S ribosomal subunit, although it is not seen to bind rRNA by itself. It is important during the early stages of 50S assembly.</text>
</comment>
<comment type="subunit">
    <text evidence="1">Part of the 50S ribosomal subunit.</text>
</comment>
<comment type="similarity">
    <text evidence="1">Belongs to the universal ribosomal protein uL13 family.</text>
</comment>
<keyword id="KW-1185">Reference proteome</keyword>
<keyword id="KW-0687">Ribonucleoprotein</keyword>
<keyword id="KW-0689">Ribosomal protein</keyword>
<organism>
    <name type="scientific">Cereibacter sphaeroides (strain ATCC 17023 / DSM 158 / JCM 6121 / CCUG 31486 / LMG 2827 / NBRC 12203 / NCIMB 8253 / ATH 2.4.1.)</name>
    <name type="common">Rhodobacter sphaeroides</name>
    <dbReference type="NCBI Taxonomy" id="272943"/>
    <lineage>
        <taxon>Bacteria</taxon>
        <taxon>Pseudomonadati</taxon>
        <taxon>Pseudomonadota</taxon>
        <taxon>Alphaproteobacteria</taxon>
        <taxon>Rhodobacterales</taxon>
        <taxon>Paracoccaceae</taxon>
        <taxon>Cereibacter</taxon>
    </lineage>
</organism>
<name>RL13_CERS4</name>
<reference key="1">
    <citation type="submission" date="2005-09" db="EMBL/GenBank/DDBJ databases">
        <title>Complete sequence of chromosome 1 of Rhodobacter sphaeroides 2.4.1.</title>
        <authorList>
            <person name="Copeland A."/>
            <person name="Lucas S."/>
            <person name="Lapidus A."/>
            <person name="Barry K."/>
            <person name="Detter J.C."/>
            <person name="Glavina T."/>
            <person name="Hammon N."/>
            <person name="Israni S."/>
            <person name="Pitluck S."/>
            <person name="Richardson P."/>
            <person name="Mackenzie C."/>
            <person name="Choudhary M."/>
            <person name="Larimer F."/>
            <person name="Hauser L.J."/>
            <person name="Land M."/>
            <person name="Donohue T.J."/>
            <person name="Kaplan S."/>
        </authorList>
    </citation>
    <scope>NUCLEOTIDE SEQUENCE [LARGE SCALE GENOMIC DNA]</scope>
    <source>
        <strain>ATCC 17023 / DSM 158 / JCM 6121 / CCUG 31486 / LMG 2827 / NBRC 12203 / NCIMB 8253 / ATH 2.4.1.</strain>
    </source>
</reference>
<feature type="chain" id="PRO_1000055456" description="Large ribosomal subunit protein uL13">
    <location>
        <begin position="1"/>
        <end position="154"/>
    </location>
</feature>